<sequence length="430" mass="50184">MSHLDVFRKFTDDQGNYNKELVNDTHGLLSLYEAAQFRVHDEEILDEAINFTTTHLKLLLPKLSNSLSMQVSYALKYPINKTIARVATRKYISFYQEEESSCDQVLINFAKLDFSILQKMHKRELCDITRWWKELDLANELAFARDRVVELYFWCLGVYFEPQYKVARNILTKVLCFVSITDDIYDTYGTLHELTLLTNAIERWNLDATENLTSYMKLFYTGLLHFYNEVEKELEKENKSFRVNFAISEMKKLVRAYFQEAKWYHGNTVPKMEEEYMKNGIQSSANPTLATASWLGMGDEATKEAFEWISTEPPILVASSNIARLLNDIVSHEREIERGDVASSIECYMNEYGATKEEAYMEIRKIIENNWKDLNRGCLKPTTVPRVLLMPVLNLTRVAEFVYKDEDAYTFSKNNLKEVISMVLDDPIEE</sequence>
<keyword id="KW-0460">Magnesium</keyword>
<keyword id="KW-0479">Metal-binding</keyword>
<keyword id="KW-1185">Reference proteome</keyword>
<accession>P0DO46</accession>
<organism>
    <name type="scientific">Solanum lycopersicum</name>
    <name type="common">Tomato</name>
    <name type="synonym">Lycopersicon esculentum</name>
    <dbReference type="NCBI Taxonomy" id="4081"/>
    <lineage>
        <taxon>Eukaryota</taxon>
        <taxon>Viridiplantae</taxon>
        <taxon>Streptophyta</taxon>
        <taxon>Embryophyta</taxon>
        <taxon>Tracheophyta</taxon>
        <taxon>Spermatophyta</taxon>
        <taxon>Magnoliopsida</taxon>
        <taxon>eudicotyledons</taxon>
        <taxon>Gunneridae</taxon>
        <taxon>Pentapetalae</taxon>
        <taxon>asterids</taxon>
        <taxon>lamiids</taxon>
        <taxon>Solanales</taxon>
        <taxon>Solanaceae</taxon>
        <taxon>Solanoideae</taxon>
        <taxon>Solaneae</taxon>
        <taxon>Solanum</taxon>
        <taxon>Solanum subgen. Lycopersicon</taxon>
    </lineage>
</organism>
<feature type="chain" id="PRO_0000454692" description="Sesquiterpene synthase 15">
    <location>
        <begin position="1"/>
        <end position="430"/>
    </location>
</feature>
<feature type="short sequence motif" description="DDXXD motif" evidence="1">
    <location>
        <begin position="182"/>
        <end position="186"/>
    </location>
</feature>
<feature type="binding site" evidence="2">
    <location>
        <position position="182"/>
    </location>
    <ligand>
        <name>Mg(2+)</name>
        <dbReference type="ChEBI" id="CHEBI:18420"/>
        <label>1</label>
    </ligand>
</feature>
<feature type="binding site" evidence="2">
    <location>
        <position position="182"/>
    </location>
    <ligand>
        <name>Mg(2+)</name>
        <dbReference type="ChEBI" id="CHEBI:18420"/>
        <label>2</label>
    </ligand>
</feature>
<feature type="binding site" evidence="2">
    <location>
        <position position="186"/>
    </location>
    <ligand>
        <name>Mg(2+)</name>
        <dbReference type="ChEBI" id="CHEBI:18420"/>
        <label>1</label>
    </ligand>
</feature>
<feature type="binding site" evidence="2">
    <location>
        <position position="186"/>
    </location>
    <ligand>
        <name>Mg(2+)</name>
        <dbReference type="ChEBI" id="CHEBI:18420"/>
        <label>2</label>
    </ligand>
</feature>
<feature type="binding site" evidence="2">
    <location>
        <position position="335"/>
    </location>
    <ligand>
        <name>Mg(2+)</name>
        <dbReference type="ChEBI" id="CHEBI:18420"/>
        <label>3</label>
    </ligand>
</feature>
<gene>
    <name evidence="4" type="primary">TPS15</name>
</gene>
<comment type="function">
    <text evidence="3">Sesquiterpene synthase involved in the biosynthesis of volatile compounds (PubMed:21818683). No activity detected with geranyl diphosphate (GPP) and farnesyl diphosphate (FPP) as substrates (PubMed:21818683).</text>
</comment>
<comment type="cofactor">
    <cofactor evidence="1">
        <name>Mg(2+)</name>
        <dbReference type="ChEBI" id="CHEBI:18420"/>
    </cofactor>
    <cofactor evidence="1">
        <name>Mn(2+)</name>
        <dbReference type="ChEBI" id="CHEBI:29035"/>
    </cofactor>
    <text evidence="1">Binds 3 Mg(2+) or Mn(2+) ions per subunit.</text>
</comment>
<comment type="pathway">
    <text evidence="3">Secondary metabolite biosynthesis; terpenoid biosynthesis.</text>
</comment>
<comment type="domain">
    <text evidence="2">The Asp-Asp-Xaa-Xaa-Asp/Glu (DDXXD/E) motif is important for the catalytic activity, presumably through binding to Mg(2+).</text>
</comment>
<comment type="similarity">
    <text evidence="5">Belongs to the terpene synthase family. Tpsa subfamily.</text>
</comment>
<proteinExistence type="evidence at transcript level"/>
<dbReference type="EMBL" id="JN402399">
    <property type="status" value="NOT_ANNOTATED_CDS"/>
    <property type="molecule type" value="mRNA"/>
</dbReference>
<dbReference type="SMR" id="P0DO46"/>
<dbReference type="InParanoid" id="P0DO46"/>
<dbReference type="UniPathway" id="UPA00213"/>
<dbReference type="Proteomes" id="UP000004994">
    <property type="component" value="Unplaced"/>
</dbReference>
<dbReference type="GO" id="GO:0000287">
    <property type="term" value="F:magnesium ion binding"/>
    <property type="evidence" value="ECO:0007669"/>
    <property type="project" value="InterPro"/>
</dbReference>
<dbReference type="GO" id="GO:0010333">
    <property type="term" value="F:terpene synthase activity"/>
    <property type="evidence" value="ECO:0007669"/>
    <property type="project" value="InterPro"/>
</dbReference>
<dbReference type="GO" id="GO:0016102">
    <property type="term" value="P:diterpenoid biosynthetic process"/>
    <property type="evidence" value="ECO:0007669"/>
    <property type="project" value="InterPro"/>
</dbReference>
<dbReference type="CDD" id="cd00684">
    <property type="entry name" value="Terpene_cyclase_plant_C1"/>
    <property type="match status" value="1"/>
</dbReference>
<dbReference type="FunFam" id="1.10.600.10:FF:000007">
    <property type="entry name" value="Isoprene synthase, chloroplastic"/>
    <property type="match status" value="1"/>
</dbReference>
<dbReference type="Gene3D" id="1.10.600.10">
    <property type="entry name" value="Farnesyl Diphosphate Synthase"/>
    <property type="match status" value="1"/>
</dbReference>
<dbReference type="Gene3D" id="1.50.10.130">
    <property type="entry name" value="Terpene synthase, N-terminal domain"/>
    <property type="match status" value="1"/>
</dbReference>
<dbReference type="InterPro" id="IPR008949">
    <property type="entry name" value="Isoprenoid_synthase_dom_sf"/>
</dbReference>
<dbReference type="InterPro" id="IPR034741">
    <property type="entry name" value="Terpene_cyclase-like_1_C"/>
</dbReference>
<dbReference type="InterPro" id="IPR044814">
    <property type="entry name" value="Terpene_cyclase_plant_C1"/>
</dbReference>
<dbReference type="InterPro" id="IPR001906">
    <property type="entry name" value="Terpene_synth_N"/>
</dbReference>
<dbReference type="InterPro" id="IPR036965">
    <property type="entry name" value="Terpene_synth_N_sf"/>
</dbReference>
<dbReference type="InterPro" id="IPR050148">
    <property type="entry name" value="Terpene_synthase-like"/>
</dbReference>
<dbReference type="InterPro" id="IPR005630">
    <property type="entry name" value="Terpene_synthase_metal-bd"/>
</dbReference>
<dbReference type="InterPro" id="IPR008930">
    <property type="entry name" value="Terpenoid_cyclase/PrenylTrfase"/>
</dbReference>
<dbReference type="PANTHER" id="PTHR31225">
    <property type="entry name" value="OS04G0344100 PROTEIN-RELATED"/>
    <property type="match status" value="1"/>
</dbReference>
<dbReference type="PANTHER" id="PTHR31225:SF76">
    <property type="entry name" value="SESQUITERPENE SYNTHASE 15"/>
    <property type="match status" value="1"/>
</dbReference>
<dbReference type="Pfam" id="PF01397">
    <property type="entry name" value="Terpene_synth"/>
    <property type="match status" value="1"/>
</dbReference>
<dbReference type="Pfam" id="PF03936">
    <property type="entry name" value="Terpene_synth_C"/>
    <property type="match status" value="1"/>
</dbReference>
<dbReference type="SFLD" id="SFLDS00005">
    <property type="entry name" value="Isoprenoid_Synthase_Type_I"/>
    <property type="match status" value="1"/>
</dbReference>
<dbReference type="SFLD" id="SFLDG01019">
    <property type="entry name" value="Terpene_Cyclase_Like_1_C_Termi"/>
    <property type="match status" value="1"/>
</dbReference>
<dbReference type="SUPFAM" id="SSF48239">
    <property type="entry name" value="Terpenoid cyclases/Protein prenyltransferases"/>
    <property type="match status" value="1"/>
</dbReference>
<dbReference type="SUPFAM" id="SSF48576">
    <property type="entry name" value="Terpenoid synthases"/>
    <property type="match status" value="1"/>
</dbReference>
<reference key="1">
    <citation type="journal article" date="2011" name="Plant Mol. Biol.">
        <title>RNA-seq discovery, functional characterization, and comparison of sesquiterpene synthases from Solanum lycopersicum and Solanum habrochaites trichomes.</title>
        <authorList>
            <person name="Bleeker P.M."/>
            <person name="Spyropoulou E.A."/>
            <person name="Diergaarde P.J."/>
            <person name="Volpin H."/>
            <person name="De Both M.T.J."/>
            <person name="Zerbe P."/>
            <person name="Bohlmann J."/>
            <person name="Falara V."/>
            <person name="Matsuba Y."/>
            <person name="Pichersky E."/>
            <person name="Haring M.A."/>
            <person name="Schuurink R.C."/>
        </authorList>
    </citation>
    <scope>NUCLEOTIDE SEQUENCE [MRNA]</scope>
    <scope>PATHWAY</scope>
    <scope>GENE FAMILY</scope>
    <source>
        <strain>cv. Moneymaker</strain>
    </source>
</reference>
<evidence type="ECO:0000250" key="1">
    <source>
        <dbReference type="UniProtKB" id="A0A1C9J6A7"/>
    </source>
</evidence>
<evidence type="ECO:0000250" key="2">
    <source>
        <dbReference type="UniProtKB" id="Q40577"/>
    </source>
</evidence>
<evidence type="ECO:0000269" key="3">
    <source>
    </source>
</evidence>
<evidence type="ECO:0000303" key="4">
    <source>
    </source>
</evidence>
<evidence type="ECO:0000305" key="5"/>
<name>TPS15_SOLLC</name>
<protein>
    <recommendedName>
        <fullName evidence="4">Sesquiterpene synthase 15</fullName>
        <shortName evidence="4">SlTPS15</shortName>
    </recommendedName>
</protein>